<name>AEDO_DICDI</name>
<accession>Q556I2</accession>
<accession>Q86K19</accession>
<gene>
    <name type="primary">ado-1</name>
    <name type="ORF">DDB_G0273031</name>
</gene>
<gene>
    <name type="primary">ado-2</name>
    <name type="ORF">DDB_G0274043</name>
</gene>
<feature type="chain" id="PRO_0000353848" description="Probable 2-aminoethanethiol dioxygenase">
    <location>
        <begin position="1"/>
        <end position="218"/>
    </location>
</feature>
<keyword id="KW-0223">Dioxygenase</keyword>
<keyword id="KW-0408">Iron</keyword>
<keyword id="KW-0479">Metal-binding</keyword>
<keyword id="KW-0560">Oxidoreductase</keyword>
<keyword id="KW-1185">Reference proteome</keyword>
<dbReference type="EC" id="1.13.11.19"/>
<dbReference type="EMBL" id="AAFI02000011">
    <property type="protein sequence ID" value="EAL70455.1"/>
    <property type="status" value="ALT_SEQ"/>
    <property type="molecule type" value="Genomic_DNA"/>
</dbReference>
<dbReference type="EMBL" id="AAFI02000009">
    <property type="protein sequence ID" value="EAL71153.1"/>
    <property type="status" value="ALT_SEQ"/>
    <property type="molecule type" value="Genomic_DNA"/>
</dbReference>
<dbReference type="RefSeq" id="XP_644380.1">
    <property type="nucleotide sequence ID" value="XM_639288.1"/>
</dbReference>
<dbReference type="RefSeq" id="XP_645033.1">
    <property type="nucleotide sequence ID" value="XM_639941.1"/>
</dbReference>
<dbReference type="SMR" id="Q556I2"/>
<dbReference type="FunCoup" id="Q556I2">
    <property type="interactions" value="74"/>
</dbReference>
<dbReference type="STRING" id="44689.Q556I2"/>
<dbReference type="PaxDb" id="44689-DDB0217097"/>
<dbReference type="EnsemblProtists" id="EAL70455">
    <property type="protein sequence ID" value="EAL70455"/>
    <property type="gene ID" value="DDB_G0274043"/>
</dbReference>
<dbReference type="EnsemblProtists" id="EAL71153">
    <property type="protein sequence ID" value="EAL71153"/>
    <property type="gene ID" value="DDB_G0273031"/>
</dbReference>
<dbReference type="GeneID" id="8618710"/>
<dbReference type="GeneID" id="8619266"/>
<dbReference type="KEGG" id="ddi:DDB_G0273031"/>
<dbReference type="KEGG" id="ddi:DDB_G0274043"/>
<dbReference type="dictyBase" id="DDB_G0273031"/>
<dbReference type="dictyBase" id="DDB_G0274043"/>
<dbReference type="VEuPathDB" id="AmoebaDB:DDB_G0274043"/>
<dbReference type="eggNOG" id="KOG4281">
    <property type="taxonomic scope" value="Eukaryota"/>
</dbReference>
<dbReference type="InParanoid" id="Q556I2"/>
<dbReference type="Reactome" id="R-DDI-1614558">
    <property type="pathway name" value="Degradation of cysteine and homocysteine"/>
</dbReference>
<dbReference type="PRO" id="PR:Q556I2"/>
<dbReference type="Proteomes" id="UP000002195">
    <property type="component" value="Chromosome 2"/>
</dbReference>
<dbReference type="GO" id="GO:0047800">
    <property type="term" value="F:cysteamine dioxygenase activity"/>
    <property type="evidence" value="ECO:0007669"/>
    <property type="project" value="UniProtKB-EC"/>
</dbReference>
<dbReference type="GO" id="GO:0046872">
    <property type="term" value="F:metal ion binding"/>
    <property type="evidence" value="ECO:0007669"/>
    <property type="project" value="UniProtKB-KW"/>
</dbReference>
<dbReference type="CDD" id="cd20289">
    <property type="entry name" value="cupin_ADO"/>
    <property type="match status" value="1"/>
</dbReference>
<dbReference type="Gene3D" id="2.60.120.10">
    <property type="entry name" value="Jelly Rolls"/>
    <property type="match status" value="1"/>
</dbReference>
<dbReference type="InterPro" id="IPR012864">
    <property type="entry name" value="PCO/ADO"/>
</dbReference>
<dbReference type="InterPro" id="IPR014710">
    <property type="entry name" value="RmlC-like_jellyroll"/>
</dbReference>
<dbReference type="InterPro" id="IPR011051">
    <property type="entry name" value="RmlC_Cupin_sf"/>
</dbReference>
<dbReference type="PANTHER" id="PTHR22966">
    <property type="entry name" value="2-AMINOETHANETHIOL DIOXYGENASE"/>
    <property type="match status" value="1"/>
</dbReference>
<dbReference type="PANTHER" id="PTHR22966:SF61">
    <property type="entry name" value="2-AMINOETHANETHIOL DIOXYGENASE"/>
    <property type="match status" value="1"/>
</dbReference>
<dbReference type="Pfam" id="PF07847">
    <property type="entry name" value="PCO_ADO"/>
    <property type="match status" value="1"/>
</dbReference>
<dbReference type="SUPFAM" id="SSF51182">
    <property type="entry name" value="RmlC-like cupins"/>
    <property type="match status" value="1"/>
</dbReference>
<evidence type="ECO:0000250" key="1"/>
<evidence type="ECO:0000305" key="2"/>
<reference key="1">
    <citation type="journal article" date="2002" name="Nature">
        <title>Sequence and analysis of chromosome 2 of Dictyostelium discoideum.</title>
        <authorList>
            <person name="Gloeckner G."/>
            <person name="Eichinger L."/>
            <person name="Szafranski K."/>
            <person name="Pachebat J.A."/>
            <person name="Bankier A.T."/>
            <person name="Dear P.H."/>
            <person name="Lehmann R."/>
            <person name="Baumgart C."/>
            <person name="Parra G."/>
            <person name="Abril J.F."/>
            <person name="Guigo R."/>
            <person name="Kumpf K."/>
            <person name="Tunggal B."/>
            <person name="Cox E.C."/>
            <person name="Quail M.A."/>
            <person name="Platzer M."/>
            <person name="Rosenthal A."/>
            <person name="Noegel A.A."/>
        </authorList>
    </citation>
    <scope>NUCLEOTIDE SEQUENCE [LARGE SCALE GENOMIC DNA]</scope>
    <source>
        <strain>AX4</strain>
    </source>
</reference>
<reference key="2">
    <citation type="journal article" date="2005" name="Nature">
        <title>The genome of the social amoeba Dictyostelium discoideum.</title>
        <authorList>
            <person name="Eichinger L."/>
            <person name="Pachebat J.A."/>
            <person name="Gloeckner G."/>
            <person name="Rajandream M.A."/>
            <person name="Sucgang R."/>
            <person name="Berriman M."/>
            <person name="Song J."/>
            <person name="Olsen R."/>
            <person name="Szafranski K."/>
            <person name="Xu Q."/>
            <person name="Tunggal B."/>
            <person name="Kummerfeld S."/>
            <person name="Madera M."/>
            <person name="Konfortov B.A."/>
            <person name="Rivero F."/>
            <person name="Bankier A.T."/>
            <person name="Lehmann R."/>
            <person name="Hamlin N."/>
            <person name="Davies R."/>
            <person name="Gaudet P."/>
            <person name="Fey P."/>
            <person name="Pilcher K."/>
            <person name="Chen G."/>
            <person name="Saunders D."/>
            <person name="Sodergren E.J."/>
            <person name="Davis P."/>
            <person name="Kerhornou A."/>
            <person name="Nie X."/>
            <person name="Hall N."/>
            <person name="Anjard C."/>
            <person name="Hemphill L."/>
            <person name="Bason N."/>
            <person name="Farbrother P."/>
            <person name="Desany B."/>
            <person name="Just E."/>
            <person name="Morio T."/>
            <person name="Rost R."/>
            <person name="Churcher C.M."/>
            <person name="Cooper J."/>
            <person name="Haydock S."/>
            <person name="van Driessche N."/>
            <person name="Cronin A."/>
            <person name="Goodhead I."/>
            <person name="Muzny D.M."/>
            <person name="Mourier T."/>
            <person name="Pain A."/>
            <person name="Lu M."/>
            <person name="Harper D."/>
            <person name="Lindsay R."/>
            <person name="Hauser H."/>
            <person name="James K.D."/>
            <person name="Quiles M."/>
            <person name="Madan Babu M."/>
            <person name="Saito T."/>
            <person name="Buchrieser C."/>
            <person name="Wardroper A."/>
            <person name="Felder M."/>
            <person name="Thangavelu M."/>
            <person name="Johnson D."/>
            <person name="Knights A."/>
            <person name="Loulseged H."/>
            <person name="Mungall K.L."/>
            <person name="Oliver K."/>
            <person name="Price C."/>
            <person name="Quail M.A."/>
            <person name="Urushihara H."/>
            <person name="Hernandez J."/>
            <person name="Rabbinowitsch E."/>
            <person name="Steffen D."/>
            <person name="Sanders M."/>
            <person name="Ma J."/>
            <person name="Kohara Y."/>
            <person name="Sharp S."/>
            <person name="Simmonds M.N."/>
            <person name="Spiegler S."/>
            <person name="Tivey A."/>
            <person name="Sugano S."/>
            <person name="White B."/>
            <person name="Walker D."/>
            <person name="Woodward J.R."/>
            <person name="Winckler T."/>
            <person name="Tanaka Y."/>
            <person name="Shaulsky G."/>
            <person name="Schleicher M."/>
            <person name="Weinstock G.M."/>
            <person name="Rosenthal A."/>
            <person name="Cox E.C."/>
            <person name="Chisholm R.L."/>
            <person name="Gibbs R.A."/>
            <person name="Loomis W.F."/>
            <person name="Platzer M."/>
            <person name="Kay R.R."/>
            <person name="Williams J.G."/>
            <person name="Dear P.H."/>
            <person name="Noegel A.A."/>
            <person name="Barrell B.G."/>
            <person name="Kuspa A."/>
        </authorList>
    </citation>
    <scope>NUCLEOTIDE SEQUENCE [LARGE SCALE GENOMIC DNA]</scope>
    <source>
        <strain>AX4</strain>
    </source>
</reference>
<comment type="catalytic activity">
    <reaction>
        <text>cysteamine + O2 = hypotaurine + H(+)</text>
        <dbReference type="Rhea" id="RHEA:14409"/>
        <dbReference type="ChEBI" id="CHEBI:15378"/>
        <dbReference type="ChEBI" id="CHEBI:15379"/>
        <dbReference type="ChEBI" id="CHEBI:57853"/>
        <dbReference type="ChEBI" id="CHEBI:58029"/>
        <dbReference type="EC" id="1.13.11.19"/>
    </reaction>
</comment>
<comment type="cofactor">
    <cofactor evidence="1">
        <name>Fe cation</name>
        <dbReference type="ChEBI" id="CHEBI:24875"/>
    </cofactor>
</comment>
<comment type="caution">
    <text evidence="2">The gene for this protein is duplicated in strains AX3 and AX4. These strains contain a duplication of a segment of 750 kb of chromosome 2 compared to the corresponding sequence in strain AX2.</text>
</comment>
<comment type="sequence caution" evidence="2">
    <conflict type="erroneous gene model prediction">
        <sequence resource="EMBL-CDS" id="EAL70455"/>
    </conflict>
</comment>
<comment type="sequence caution" evidence="2">
    <conflict type="erroneous gene model prediction">
        <sequence resource="EMBL-CDS" id="EAL71153"/>
    </conflict>
</comment>
<sequence>MTILKQLITKANLILPSVDKKVATLDSLVSVFKEIKCKDLKIDKPLTLTKPIGNGKKVFYYPLVENEKFTLAIFAFPPNTCIPTHDHPQMTVLSKVLYGSISCDSFDWIDNTSNVKKQGKAIYTGTNILNSNDEKVKITLPNENNIHRFQSGDEHCAVLDLLYPPYDSNFYRSCTYYRPTSVNGSIVDLMPYYPDFDCEGDSSNKELNDLHIELSKLK</sequence>
<proteinExistence type="predicted"/>
<protein>
    <recommendedName>
        <fullName>Probable 2-aminoethanethiol dioxygenase</fullName>
        <ecNumber>1.13.11.19</ecNumber>
    </recommendedName>
    <alternativeName>
        <fullName>Cysteamine dioxygenase</fullName>
    </alternativeName>
</protein>
<organism>
    <name type="scientific">Dictyostelium discoideum</name>
    <name type="common">Social amoeba</name>
    <dbReference type="NCBI Taxonomy" id="44689"/>
    <lineage>
        <taxon>Eukaryota</taxon>
        <taxon>Amoebozoa</taxon>
        <taxon>Evosea</taxon>
        <taxon>Eumycetozoa</taxon>
        <taxon>Dictyostelia</taxon>
        <taxon>Dictyosteliales</taxon>
        <taxon>Dictyosteliaceae</taxon>
        <taxon>Dictyostelium</taxon>
    </lineage>
</organism>